<keyword id="KW-0030">Aminoacyl-tRNA synthetase</keyword>
<keyword id="KW-0067">ATP-binding</keyword>
<keyword id="KW-0963">Cytoplasm</keyword>
<keyword id="KW-0436">Ligase</keyword>
<keyword id="KW-0547">Nucleotide-binding</keyword>
<keyword id="KW-0648">Protein biosynthesis</keyword>
<dbReference type="EC" id="6.1.1.19" evidence="1"/>
<dbReference type="EMBL" id="CP000768">
    <property type="protein sequence ID" value="ABS44529.1"/>
    <property type="molecule type" value="Genomic_DNA"/>
</dbReference>
<dbReference type="SMR" id="A7H2J9"/>
<dbReference type="KEGG" id="cjd:JJD26997_0554"/>
<dbReference type="HOGENOM" id="CLU_006406_0_1_7"/>
<dbReference type="Proteomes" id="UP000002302">
    <property type="component" value="Chromosome"/>
</dbReference>
<dbReference type="GO" id="GO:0005737">
    <property type="term" value="C:cytoplasm"/>
    <property type="evidence" value="ECO:0007669"/>
    <property type="project" value="UniProtKB-SubCell"/>
</dbReference>
<dbReference type="GO" id="GO:0004814">
    <property type="term" value="F:arginine-tRNA ligase activity"/>
    <property type="evidence" value="ECO:0007669"/>
    <property type="project" value="UniProtKB-UniRule"/>
</dbReference>
<dbReference type="GO" id="GO:0005524">
    <property type="term" value="F:ATP binding"/>
    <property type="evidence" value="ECO:0007669"/>
    <property type="project" value="UniProtKB-UniRule"/>
</dbReference>
<dbReference type="GO" id="GO:0006420">
    <property type="term" value="P:arginyl-tRNA aminoacylation"/>
    <property type="evidence" value="ECO:0007669"/>
    <property type="project" value="UniProtKB-UniRule"/>
</dbReference>
<dbReference type="CDD" id="cd00671">
    <property type="entry name" value="ArgRS_core"/>
    <property type="match status" value="1"/>
</dbReference>
<dbReference type="FunFam" id="3.40.50.620:FF:000062">
    <property type="entry name" value="Arginine--tRNA ligase"/>
    <property type="match status" value="1"/>
</dbReference>
<dbReference type="Gene3D" id="3.30.1360.70">
    <property type="entry name" value="Arginyl tRNA synthetase N-terminal domain"/>
    <property type="match status" value="1"/>
</dbReference>
<dbReference type="Gene3D" id="3.40.50.620">
    <property type="entry name" value="HUPs"/>
    <property type="match status" value="1"/>
</dbReference>
<dbReference type="Gene3D" id="1.10.730.10">
    <property type="entry name" value="Isoleucyl-tRNA Synthetase, Domain 1"/>
    <property type="match status" value="1"/>
</dbReference>
<dbReference type="HAMAP" id="MF_00123">
    <property type="entry name" value="Arg_tRNA_synth"/>
    <property type="match status" value="1"/>
</dbReference>
<dbReference type="InterPro" id="IPR001412">
    <property type="entry name" value="aa-tRNA-synth_I_CS"/>
</dbReference>
<dbReference type="InterPro" id="IPR001278">
    <property type="entry name" value="Arg-tRNA-ligase"/>
</dbReference>
<dbReference type="InterPro" id="IPR005148">
    <property type="entry name" value="Arg-tRNA-synth_N"/>
</dbReference>
<dbReference type="InterPro" id="IPR036695">
    <property type="entry name" value="Arg-tRNA-synth_N_sf"/>
</dbReference>
<dbReference type="InterPro" id="IPR035684">
    <property type="entry name" value="ArgRS_core"/>
</dbReference>
<dbReference type="InterPro" id="IPR008909">
    <property type="entry name" value="DALR_anticod-bd"/>
</dbReference>
<dbReference type="InterPro" id="IPR014729">
    <property type="entry name" value="Rossmann-like_a/b/a_fold"/>
</dbReference>
<dbReference type="InterPro" id="IPR009080">
    <property type="entry name" value="tRNAsynth_Ia_anticodon-bd"/>
</dbReference>
<dbReference type="NCBIfam" id="TIGR00456">
    <property type="entry name" value="argS"/>
    <property type="match status" value="1"/>
</dbReference>
<dbReference type="PANTHER" id="PTHR11956:SF5">
    <property type="entry name" value="ARGININE--TRNA LIGASE, CYTOPLASMIC"/>
    <property type="match status" value="1"/>
</dbReference>
<dbReference type="PANTHER" id="PTHR11956">
    <property type="entry name" value="ARGINYL-TRNA SYNTHETASE"/>
    <property type="match status" value="1"/>
</dbReference>
<dbReference type="Pfam" id="PF03485">
    <property type="entry name" value="Arg_tRNA_synt_N"/>
    <property type="match status" value="1"/>
</dbReference>
<dbReference type="Pfam" id="PF05746">
    <property type="entry name" value="DALR_1"/>
    <property type="match status" value="1"/>
</dbReference>
<dbReference type="Pfam" id="PF00750">
    <property type="entry name" value="tRNA-synt_1d"/>
    <property type="match status" value="1"/>
</dbReference>
<dbReference type="PRINTS" id="PR01038">
    <property type="entry name" value="TRNASYNTHARG"/>
</dbReference>
<dbReference type="SMART" id="SM01016">
    <property type="entry name" value="Arg_tRNA_synt_N"/>
    <property type="match status" value="1"/>
</dbReference>
<dbReference type="SMART" id="SM00836">
    <property type="entry name" value="DALR_1"/>
    <property type="match status" value="1"/>
</dbReference>
<dbReference type="SUPFAM" id="SSF47323">
    <property type="entry name" value="Anticodon-binding domain of a subclass of class I aminoacyl-tRNA synthetases"/>
    <property type="match status" value="1"/>
</dbReference>
<dbReference type="SUPFAM" id="SSF55190">
    <property type="entry name" value="Arginyl-tRNA synthetase (ArgRS), N-terminal 'additional' domain"/>
    <property type="match status" value="1"/>
</dbReference>
<dbReference type="SUPFAM" id="SSF52374">
    <property type="entry name" value="Nucleotidylyl transferase"/>
    <property type="match status" value="1"/>
</dbReference>
<dbReference type="PROSITE" id="PS00178">
    <property type="entry name" value="AA_TRNA_LIGASE_I"/>
    <property type="match status" value="1"/>
</dbReference>
<comment type="catalytic activity">
    <reaction evidence="1">
        <text>tRNA(Arg) + L-arginine + ATP = L-arginyl-tRNA(Arg) + AMP + diphosphate</text>
        <dbReference type="Rhea" id="RHEA:20301"/>
        <dbReference type="Rhea" id="RHEA-COMP:9658"/>
        <dbReference type="Rhea" id="RHEA-COMP:9673"/>
        <dbReference type="ChEBI" id="CHEBI:30616"/>
        <dbReference type="ChEBI" id="CHEBI:32682"/>
        <dbReference type="ChEBI" id="CHEBI:33019"/>
        <dbReference type="ChEBI" id="CHEBI:78442"/>
        <dbReference type="ChEBI" id="CHEBI:78513"/>
        <dbReference type="ChEBI" id="CHEBI:456215"/>
        <dbReference type="EC" id="6.1.1.19"/>
    </reaction>
</comment>
<comment type="subunit">
    <text evidence="1">Monomer.</text>
</comment>
<comment type="subcellular location">
    <subcellularLocation>
        <location evidence="1">Cytoplasm</location>
    </subcellularLocation>
</comment>
<comment type="similarity">
    <text evidence="1">Belongs to the class-I aminoacyl-tRNA synthetase family.</text>
</comment>
<sequence>MKSIIFNEIKKILECDFALENPKDKNLAHFATPLAFSLAKELKKSPMFIASDLASKFQNHDCFESVEAVNGYLNFRISKTFLNELANQALTNPNDFTKGEKKQESFLLEYVSANPTGPLHIGHARGAVFGNTLTRLARHLGYKFDTEYYVNDAGNQIYLLGLSILLSVKENILHENVEYPEQYYKGEYIADLAKEAFEKFGKEFFSEENIPSLADWAKDKMLVLIKQNLEQAKIKIDSYVSERSYYDALNATLESLKEHKGIYEQEGKIWLASSQKGDEKDRVIIREDGRGTYLAADIVYHKDKMSRGYGKCINIWGADHHGYIPRMKAAMEFLGFDSNNLEIILAQMVSLLKDGEPYKMSKRAGNFILMSAVVDEIGSDALRYIFLSKKCDTHLEFDISDLQKEDSSNPVYYINYAHARIYQVFAKAGKKIDDVMGADLQSLNQDGINLLFEALNLKAILNDAFEARALQKIPDYLKNLAANFHKFYNENKVVGSANENDLLKLFSLVALSIKTAFSLMGIEAKNKMEH</sequence>
<protein>
    <recommendedName>
        <fullName evidence="1">Arginine--tRNA ligase</fullName>
        <ecNumber evidence="1">6.1.1.19</ecNumber>
    </recommendedName>
    <alternativeName>
        <fullName evidence="1">Arginyl-tRNA synthetase</fullName>
        <shortName evidence="1">ArgRS</shortName>
    </alternativeName>
</protein>
<name>SYR_CAMJD</name>
<reference key="1">
    <citation type="submission" date="2007-07" db="EMBL/GenBank/DDBJ databases">
        <title>Complete genome sequence of Campylobacter jejuni subsp doylei 269.97 isolated from human blood.</title>
        <authorList>
            <person name="Fouts D.E."/>
            <person name="Mongodin E.F."/>
            <person name="Puiu D."/>
            <person name="Sebastian Y."/>
            <person name="Miller W.G."/>
            <person name="Mandrell R.E."/>
            <person name="Lastovica A.J."/>
            <person name="Nelson K.E."/>
        </authorList>
    </citation>
    <scope>NUCLEOTIDE SEQUENCE [LARGE SCALE GENOMIC DNA]</scope>
    <source>
        <strain>ATCC BAA-1458 / RM4099 / 269.97</strain>
    </source>
</reference>
<organism>
    <name type="scientific">Campylobacter jejuni subsp. doylei (strain ATCC BAA-1458 / RM4099 / 269.97)</name>
    <dbReference type="NCBI Taxonomy" id="360109"/>
    <lineage>
        <taxon>Bacteria</taxon>
        <taxon>Pseudomonadati</taxon>
        <taxon>Campylobacterota</taxon>
        <taxon>Epsilonproteobacteria</taxon>
        <taxon>Campylobacterales</taxon>
        <taxon>Campylobacteraceae</taxon>
        <taxon>Campylobacter</taxon>
    </lineage>
</organism>
<evidence type="ECO:0000255" key="1">
    <source>
        <dbReference type="HAMAP-Rule" id="MF_00123"/>
    </source>
</evidence>
<gene>
    <name evidence="1" type="primary">argS</name>
    <name type="ordered locus">JJD26997_0554</name>
</gene>
<proteinExistence type="inferred from homology"/>
<accession>A7H2J9</accession>
<feature type="chain" id="PRO_1000018010" description="Arginine--tRNA ligase">
    <location>
        <begin position="1"/>
        <end position="530"/>
    </location>
</feature>
<feature type="short sequence motif" description="'HIGH' region">
    <location>
        <begin position="113"/>
        <end position="123"/>
    </location>
</feature>